<gene>
    <name evidence="1" type="primary">rph</name>
    <name type="ordered locus">BCAH820_4571</name>
</gene>
<dbReference type="EC" id="2.7.7.56" evidence="1"/>
<dbReference type="EMBL" id="CP001283">
    <property type="protein sequence ID" value="ACK88664.1"/>
    <property type="molecule type" value="Genomic_DNA"/>
</dbReference>
<dbReference type="RefSeq" id="WP_001261764.1">
    <property type="nucleotide sequence ID" value="NC_011773.1"/>
</dbReference>
<dbReference type="SMR" id="B7JQ74"/>
<dbReference type="GeneID" id="45024354"/>
<dbReference type="KEGG" id="bcu:BCAH820_4571"/>
<dbReference type="HOGENOM" id="CLU_050858_0_0_9"/>
<dbReference type="Proteomes" id="UP000001363">
    <property type="component" value="Chromosome"/>
</dbReference>
<dbReference type="GO" id="GO:0000175">
    <property type="term" value="F:3'-5'-RNA exonuclease activity"/>
    <property type="evidence" value="ECO:0007669"/>
    <property type="project" value="UniProtKB-UniRule"/>
</dbReference>
<dbReference type="GO" id="GO:0000049">
    <property type="term" value="F:tRNA binding"/>
    <property type="evidence" value="ECO:0007669"/>
    <property type="project" value="UniProtKB-UniRule"/>
</dbReference>
<dbReference type="GO" id="GO:0009022">
    <property type="term" value="F:tRNA nucleotidyltransferase activity"/>
    <property type="evidence" value="ECO:0007669"/>
    <property type="project" value="UniProtKB-UniRule"/>
</dbReference>
<dbReference type="GO" id="GO:0016075">
    <property type="term" value="P:rRNA catabolic process"/>
    <property type="evidence" value="ECO:0007669"/>
    <property type="project" value="UniProtKB-UniRule"/>
</dbReference>
<dbReference type="GO" id="GO:0006364">
    <property type="term" value="P:rRNA processing"/>
    <property type="evidence" value="ECO:0007669"/>
    <property type="project" value="UniProtKB-KW"/>
</dbReference>
<dbReference type="GO" id="GO:0008033">
    <property type="term" value="P:tRNA processing"/>
    <property type="evidence" value="ECO:0007669"/>
    <property type="project" value="UniProtKB-UniRule"/>
</dbReference>
<dbReference type="CDD" id="cd11362">
    <property type="entry name" value="RNase_PH_bact"/>
    <property type="match status" value="1"/>
</dbReference>
<dbReference type="FunFam" id="3.30.230.70:FF:000003">
    <property type="entry name" value="Ribonuclease PH"/>
    <property type="match status" value="1"/>
</dbReference>
<dbReference type="Gene3D" id="3.30.230.70">
    <property type="entry name" value="GHMP Kinase, N-terminal domain"/>
    <property type="match status" value="1"/>
</dbReference>
<dbReference type="HAMAP" id="MF_00564">
    <property type="entry name" value="RNase_PH"/>
    <property type="match status" value="1"/>
</dbReference>
<dbReference type="InterPro" id="IPR001247">
    <property type="entry name" value="ExoRNase_PH_dom1"/>
</dbReference>
<dbReference type="InterPro" id="IPR015847">
    <property type="entry name" value="ExoRNase_PH_dom2"/>
</dbReference>
<dbReference type="InterPro" id="IPR036345">
    <property type="entry name" value="ExoRNase_PH_dom2_sf"/>
</dbReference>
<dbReference type="InterPro" id="IPR027408">
    <property type="entry name" value="PNPase/RNase_PH_dom_sf"/>
</dbReference>
<dbReference type="InterPro" id="IPR020568">
    <property type="entry name" value="Ribosomal_Su5_D2-typ_SF"/>
</dbReference>
<dbReference type="InterPro" id="IPR050080">
    <property type="entry name" value="RNase_PH"/>
</dbReference>
<dbReference type="InterPro" id="IPR002381">
    <property type="entry name" value="RNase_PH_bac-type"/>
</dbReference>
<dbReference type="InterPro" id="IPR018336">
    <property type="entry name" value="RNase_PH_CS"/>
</dbReference>
<dbReference type="NCBIfam" id="TIGR01966">
    <property type="entry name" value="RNasePH"/>
    <property type="match status" value="1"/>
</dbReference>
<dbReference type="PANTHER" id="PTHR11953">
    <property type="entry name" value="EXOSOME COMPLEX COMPONENT"/>
    <property type="match status" value="1"/>
</dbReference>
<dbReference type="PANTHER" id="PTHR11953:SF0">
    <property type="entry name" value="EXOSOME COMPLEX COMPONENT RRP41"/>
    <property type="match status" value="1"/>
</dbReference>
<dbReference type="Pfam" id="PF01138">
    <property type="entry name" value="RNase_PH"/>
    <property type="match status" value="1"/>
</dbReference>
<dbReference type="Pfam" id="PF03725">
    <property type="entry name" value="RNase_PH_C"/>
    <property type="match status" value="1"/>
</dbReference>
<dbReference type="SUPFAM" id="SSF55666">
    <property type="entry name" value="Ribonuclease PH domain 2-like"/>
    <property type="match status" value="1"/>
</dbReference>
<dbReference type="SUPFAM" id="SSF54211">
    <property type="entry name" value="Ribosomal protein S5 domain 2-like"/>
    <property type="match status" value="1"/>
</dbReference>
<dbReference type="PROSITE" id="PS01277">
    <property type="entry name" value="RIBONUCLEASE_PH"/>
    <property type="match status" value="1"/>
</dbReference>
<reference key="1">
    <citation type="submission" date="2008-10" db="EMBL/GenBank/DDBJ databases">
        <title>Genome sequence of Bacillus cereus AH820.</title>
        <authorList>
            <person name="Dodson R.J."/>
            <person name="Durkin A.S."/>
            <person name="Rosovitz M.J."/>
            <person name="Rasko D.A."/>
            <person name="Hoffmaster A."/>
            <person name="Ravel J."/>
            <person name="Sutton G."/>
        </authorList>
    </citation>
    <scope>NUCLEOTIDE SEQUENCE [LARGE SCALE GENOMIC DNA]</scope>
    <source>
        <strain>AH820</strain>
    </source>
</reference>
<name>RNPH_BACC0</name>
<proteinExistence type="inferred from homology"/>
<feature type="chain" id="PRO_1000129318" description="Ribonuclease PH">
    <location>
        <begin position="1"/>
        <end position="245"/>
    </location>
</feature>
<feature type="binding site" evidence="1">
    <location>
        <position position="86"/>
    </location>
    <ligand>
        <name>phosphate</name>
        <dbReference type="ChEBI" id="CHEBI:43474"/>
        <note>substrate</note>
    </ligand>
</feature>
<feature type="binding site" evidence="1">
    <location>
        <begin position="124"/>
        <end position="126"/>
    </location>
    <ligand>
        <name>phosphate</name>
        <dbReference type="ChEBI" id="CHEBI:43474"/>
        <note>substrate</note>
    </ligand>
</feature>
<comment type="function">
    <text evidence="1">Phosphorolytic 3'-5' exoribonuclease that plays an important role in tRNA 3'-end maturation. Removes nucleotide residues following the 3'-CCA terminus of tRNAs; can also add nucleotides to the ends of RNA molecules by using nucleoside diphosphates as substrates, but this may not be physiologically important. Probably plays a role in initiation of 16S rRNA degradation (leading to ribosome degradation) during starvation.</text>
</comment>
<comment type="catalytic activity">
    <reaction evidence="1">
        <text>tRNA(n+1) + phosphate = tRNA(n) + a ribonucleoside 5'-diphosphate</text>
        <dbReference type="Rhea" id="RHEA:10628"/>
        <dbReference type="Rhea" id="RHEA-COMP:17343"/>
        <dbReference type="Rhea" id="RHEA-COMP:17344"/>
        <dbReference type="ChEBI" id="CHEBI:43474"/>
        <dbReference type="ChEBI" id="CHEBI:57930"/>
        <dbReference type="ChEBI" id="CHEBI:173114"/>
        <dbReference type="EC" id="2.7.7.56"/>
    </reaction>
</comment>
<comment type="subunit">
    <text evidence="1">Homohexameric ring arranged as a trimer of dimers.</text>
</comment>
<comment type="similarity">
    <text evidence="1">Belongs to the RNase PH family.</text>
</comment>
<protein>
    <recommendedName>
        <fullName evidence="1">Ribonuclease PH</fullName>
        <shortName evidence="1">RNase PH</shortName>
        <ecNumber evidence="1">2.7.7.56</ecNumber>
    </recommendedName>
    <alternativeName>
        <fullName evidence="1">tRNA nucleotidyltransferase</fullName>
    </alternativeName>
</protein>
<organism>
    <name type="scientific">Bacillus cereus (strain AH820)</name>
    <dbReference type="NCBI Taxonomy" id="405535"/>
    <lineage>
        <taxon>Bacteria</taxon>
        <taxon>Bacillati</taxon>
        <taxon>Bacillota</taxon>
        <taxon>Bacilli</taxon>
        <taxon>Bacillales</taxon>
        <taxon>Bacillaceae</taxon>
        <taxon>Bacillus</taxon>
        <taxon>Bacillus cereus group</taxon>
    </lineage>
</organism>
<keyword id="KW-0548">Nucleotidyltransferase</keyword>
<keyword id="KW-0694">RNA-binding</keyword>
<keyword id="KW-0698">rRNA processing</keyword>
<keyword id="KW-0808">Transferase</keyword>
<keyword id="KW-0819">tRNA processing</keyword>
<keyword id="KW-0820">tRNA-binding</keyword>
<evidence type="ECO:0000255" key="1">
    <source>
        <dbReference type="HAMAP-Rule" id="MF_00564"/>
    </source>
</evidence>
<accession>B7JQ74</accession>
<sequence>MRVDGREKTELRHIHIHTNYLKHPEGSVLIEVGDTKVICSATIEERVPPFMRGEGKGWVTAEYAMIPRATEQRTIRESSKGKVTGRTMEIQRLIGRALRAVVDLEALGERTVWIDCDVIQADGGTRTASITGAYVAMVLAFEKLLQAEKVSKIPVKDYLAATSVGIVEEQGVVLDLNYAEDSKADVDMNVIMTGKGQFVEVQGTGEEATFSRAQLNELLDAAEQGIFQLIDIQKEALGDIVSHIE</sequence>